<gene>
    <name evidence="4" type="primary">nocK</name>
</gene>
<name>NOCK_NOCUT</name>
<reference key="1">
    <citation type="journal article" date="2004" name="Chem. Biol.">
        <title>The biosynthetic gene cluster for a monocyclic beta-lactam antibiotic, nocardicin A.</title>
        <authorList>
            <person name="Gunsior M."/>
            <person name="Breazeale S.D."/>
            <person name="Lind A.J."/>
            <person name="Ravel J."/>
            <person name="Janc J.W."/>
            <person name="Townsend C.A."/>
        </authorList>
    </citation>
    <scope>NUCLEOTIDE SEQUENCE [GENOMIC DNA]</scope>
    <source>
        <strain>ATCC 21806 / CECT 3282 / JCM 3279 / WS 1571</strain>
    </source>
</reference>
<reference key="2">
    <citation type="journal article" date="2005" name="J. Bacteriol.">
        <title>Mutational analysis of nocK and nocL in the nocardicin a producer Nocardia uniformis.</title>
        <authorList>
            <person name="Kelly W.L."/>
            <person name="Townsend C.A."/>
        </authorList>
    </citation>
    <scope>DISRUPTION PHENOTYPE</scope>
    <source>
        <strain>ATCC 21806 / CECT 3282 / JCM 3279 / WS 1571</strain>
    </source>
</reference>
<keyword id="KW-0378">Hydrolase</keyword>
<keyword id="KW-0732">Signal</keyword>
<dbReference type="EC" id="3.1.-.-" evidence="5"/>
<dbReference type="EMBL" id="AY541063">
    <property type="protein sequence ID" value="AAT09798.1"/>
    <property type="molecule type" value="Genomic_DNA"/>
</dbReference>
<dbReference type="SMR" id="Q5J1R3"/>
<dbReference type="GO" id="GO:0016787">
    <property type="term" value="F:hydrolase activity"/>
    <property type="evidence" value="ECO:0007669"/>
    <property type="project" value="UniProtKB-KW"/>
</dbReference>
<dbReference type="Gene3D" id="3.40.50.1820">
    <property type="entry name" value="alpha/beta hydrolase"/>
    <property type="match status" value="1"/>
</dbReference>
<dbReference type="InterPro" id="IPR029058">
    <property type="entry name" value="AB_hydrolase_fold"/>
</dbReference>
<dbReference type="InterPro" id="IPR050955">
    <property type="entry name" value="Plant_Biomass_Hydrol_Est"/>
</dbReference>
<dbReference type="InterPro" id="IPR003140">
    <property type="entry name" value="PLipase/COase/thioEstase"/>
</dbReference>
<dbReference type="InterPro" id="IPR006311">
    <property type="entry name" value="TAT_signal"/>
</dbReference>
<dbReference type="PANTHER" id="PTHR43037:SF1">
    <property type="entry name" value="BLL1128 PROTEIN"/>
    <property type="match status" value="1"/>
</dbReference>
<dbReference type="PANTHER" id="PTHR43037">
    <property type="entry name" value="UNNAMED PRODUCT-RELATED"/>
    <property type="match status" value="1"/>
</dbReference>
<dbReference type="Pfam" id="PF02230">
    <property type="entry name" value="Abhydrolase_2"/>
    <property type="match status" value="1"/>
</dbReference>
<dbReference type="SUPFAM" id="SSF53474">
    <property type="entry name" value="alpha/beta-Hydrolases"/>
    <property type="match status" value="1"/>
</dbReference>
<dbReference type="PROSITE" id="PS51318">
    <property type="entry name" value="TAT"/>
    <property type="match status" value="1"/>
</dbReference>
<sequence>MIGVTRRSGLALAVLVSSAACAGAEPVAPPPAPAPTAPSAVAVERFTPVERRPVADATTTAREVVVAGRTRAYRLHASPGAPALPEGRPLALVLHGKGGSAEEMERHSGLNAAADAAGVALAYLEGVAEGWSASPEPTDLRPDPDADVDFARAVVDELTGAARVDPDHVYAIGFSEGGMMALRLAAEHPDWFAGVASVAGQLPSPPAEVRPTGPIPVLSIYGDADPLRPFDGLSTAPADTPAIGKEPPKPTISTAETVEAFCRAGGADERRREEARPAAAPGGTSTSRETCANPDSGLRVVSITVHGGGHTWPGGTFPYRPAVVGATDRQLSTADTAVDFLLGG</sequence>
<accession>Q5J1R3</accession>
<evidence type="ECO:0000255" key="1">
    <source>
        <dbReference type="PROSITE-ProRule" id="PRU00648"/>
    </source>
</evidence>
<evidence type="ECO:0000256" key="2">
    <source>
        <dbReference type="SAM" id="MobiDB-lite"/>
    </source>
</evidence>
<evidence type="ECO:0000269" key="3">
    <source>
    </source>
</evidence>
<evidence type="ECO:0000303" key="4">
    <source>
    </source>
</evidence>
<evidence type="ECO:0000305" key="5"/>
<evidence type="ECO:0000305" key="6">
    <source>
    </source>
</evidence>
<evidence type="ECO:0000305" key="7">
    <source>
    </source>
</evidence>
<feature type="signal peptide" description="Tat-type signal" evidence="1">
    <location>
        <begin position="1"/>
        <end position="34"/>
    </location>
</feature>
<feature type="chain" id="PRO_5004257768" description="Putative esterase NocK">
    <location>
        <begin position="35"/>
        <end position="344"/>
    </location>
</feature>
<feature type="region of interest" description="Disordered" evidence="2">
    <location>
        <begin position="265"/>
        <end position="295"/>
    </location>
</feature>
<feature type="compositionally biased region" description="Basic and acidic residues" evidence="2">
    <location>
        <begin position="266"/>
        <end position="276"/>
    </location>
</feature>
<organism>
    <name type="scientific">Nocardia uniformis subsp. tsuyamanensis</name>
    <dbReference type="NCBI Taxonomy" id="96045"/>
    <lineage>
        <taxon>Bacteria</taxon>
        <taxon>Bacillati</taxon>
        <taxon>Actinomycetota</taxon>
        <taxon>Actinomycetes</taxon>
        <taxon>Mycobacteriales</taxon>
        <taxon>Nocardiaceae</taxon>
        <taxon>Nocardia</taxon>
    </lineage>
</organism>
<protein>
    <recommendedName>
        <fullName evidence="5">Putative esterase NocK</fullName>
        <ecNumber evidence="5">3.1.-.-</ecNumber>
    </recommendedName>
</protein>
<comment type="PTM">
    <text evidence="1">Predicted to be exported by the Tat system. The position of the signal peptide cleavage has not been experimentally proven.</text>
</comment>
<comment type="disruption phenotype">
    <text evidence="3">Disruption mutant still produces nocardicin A at levels near that seen for wild-type strain.</text>
</comment>
<comment type="miscellaneous">
    <text evidence="6 7">Part of the biosynthetic gene cluster for the beta-lactam antibiotic nocardicin A, but disruption of the gene shows that NocK has no obvious role in nocardicin biosynthesis.</text>
</comment>
<comment type="similarity">
    <text evidence="5">Belongs to the AB hydrolase superfamily.</text>
</comment>
<proteinExistence type="inferred from homology"/>